<accession>A9C2R2</accession>
<dbReference type="EC" id="2.8.1.6" evidence="1"/>
<dbReference type="EMBL" id="CP000884">
    <property type="protein sequence ID" value="ABX36411.1"/>
    <property type="molecule type" value="Genomic_DNA"/>
</dbReference>
<dbReference type="RefSeq" id="WP_012205605.1">
    <property type="nucleotide sequence ID" value="NC_010002.1"/>
</dbReference>
<dbReference type="SMR" id="A9C2R2"/>
<dbReference type="STRING" id="398578.Daci_3779"/>
<dbReference type="GeneID" id="94692291"/>
<dbReference type="KEGG" id="dac:Daci_3779"/>
<dbReference type="eggNOG" id="COG0502">
    <property type="taxonomic scope" value="Bacteria"/>
</dbReference>
<dbReference type="HOGENOM" id="CLU_033172_1_2_4"/>
<dbReference type="UniPathway" id="UPA00078">
    <property type="reaction ID" value="UER00162"/>
</dbReference>
<dbReference type="Proteomes" id="UP000000784">
    <property type="component" value="Chromosome"/>
</dbReference>
<dbReference type="GO" id="GO:0051537">
    <property type="term" value="F:2 iron, 2 sulfur cluster binding"/>
    <property type="evidence" value="ECO:0007669"/>
    <property type="project" value="UniProtKB-KW"/>
</dbReference>
<dbReference type="GO" id="GO:0051539">
    <property type="term" value="F:4 iron, 4 sulfur cluster binding"/>
    <property type="evidence" value="ECO:0007669"/>
    <property type="project" value="UniProtKB-KW"/>
</dbReference>
<dbReference type="GO" id="GO:0004076">
    <property type="term" value="F:biotin synthase activity"/>
    <property type="evidence" value="ECO:0007669"/>
    <property type="project" value="UniProtKB-UniRule"/>
</dbReference>
<dbReference type="GO" id="GO:0005506">
    <property type="term" value="F:iron ion binding"/>
    <property type="evidence" value="ECO:0007669"/>
    <property type="project" value="UniProtKB-UniRule"/>
</dbReference>
<dbReference type="GO" id="GO:0009102">
    <property type="term" value="P:biotin biosynthetic process"/>
    <property type="evidence" value="ECO:0007669"/>
    <property type="project" value="UniProtKB-UniRule"/>
</dbReference>
<dbReference type="CDD" id="cd01335">
    <property type="entry name" value="Radical_SAM"/>
    <property type="match status" value="1"/>
</dbReference>
<dbReference type="FunFam" id="3.20.20.70:FF:000011">
    <property type="entry name" value="Biotin synthase"/>
    <property type="match status" value="1"/>
</dbReference>
<dbReference type="Gene3D" id="3.20.20.70">
    <property type="entry name" value="Aldolase class I"/>
    <property type="match status" value="1"/>
</dbReference>
<dbReference type="HAMAP" id="MF_01694">
    <property type="entry name" value="BioB"/>
    <property type="match status" value="1"/>
</dbReference>
<dbReference type="InterPro" id="IPR013785">
    <property type="entry name" value="Aldolase_TIM"/>
</dbReference>
<dbReference type="InterPro" id="IPR010722">
    <property type="entry name" value="BATS_dom"/>
</dbReference>
<dbReference type="InterPro" id="IPR002684">
    <property type="entry name" value="Biotin_synth/BioAB"/>
</dbReference>
<dbReference type="InterPro" id="IPR024177">
    <property type="entry name" value="Biotin_synthase"/>
</dbReference>
<dbReference type="InterPro" id="IPR006638">
    <property type="entry name" value="Elp3/MiaA/NifB-like_rSAM"/>
</dbReference>
<dbReference type="InterPro" id="IPR007197">
    <property type="entry name" value="rSAM"/>
</dbReference>
<dbReference type="NCBIfam" id="TIGR00433">
    <property type="entry name" value="bioB"/>
    <property type="match status" value="1"/>
</dbReference>
<dbReference type="PANTHER" id="PTHR22976">
    <property type="entry name" value="BIOTIN SYNTHASE"/>
    <property type="match status" value="1"/>
</dbReference>
<dbReference type="PANTHER" id="PTHR22976:SF2">
    <property type="entry name" value="BIOTIN SYNTHASE, MITOCHONDRIAL"/>
    <property type="match status" value="1"/>
</dbReference>
<dbReference type="Pfam" id="PF06968">
    <property type="entry name" value="BATS"/>
    <property type="match status" value="1"/>
</dbReference>
<dbReference type="Pfam" id="PF04055">
    <property type="entry name" value="Radical_SAM"/>
    <property type="match status" value="1"/>
</dbReference>
<dbReference type="PIRSF" id="PIRSF001619">
    <property type="entry name" value="Biotin_synth"/>
    <property type="match status" value="1"/>
</dbReference>
<dbReference type="SFLD" id="SFLDF00272">
    <property type="entry name" value="biotin_synthase"/>
    <property type="match status" value="1"/>
</dbReference>
<dbReference type="SFLD" id="SFLDG01278">
    <property type="entry name" value="biotin_synthase_like"/>
    <property type="match status" value="1"/>
</dbReference>
<dbReference type="SMART" id="SM00876">
    <property type="entry name" value="BATS"/>
    <property type="match status" value="1"/>
</dbReference>
<dbReference type="SMART" id="SM00729">
    <property type="entry name" value="Elp3"/>
    <property type="match status" value="1"/>
</dbReference>
<dbReference type="SUPFAM" id="SSF102114">
    <property type="entry name" value="Radical SAM enzymes"/>
    <property type="match status" value="1"/>
</dbReference>
<dbReference type="PROSITE" id="PS51918">
    <property type="entry name" value="RADICAL_SAM"/>
    <property type="match status" value="1"/>
</dbReference>
<evidence type="ECO:0000255" key="1">
    <source>
        <dbReference type="HAMAP-Rule" id="MF_01694"/>
    </source>
</evidence>
<evidence type="ECO:0000255" key="2">
    <source>
        <dbReference type="PROSITE-ProRule" id="PRU01266"/>
    </source>
</evidence>
<evidence type="ECO:0000256" key="3">
    <source>
        <dbReference type="SAM" id="MobiDB-lite"/>
    </source>
</evidence>
<feature type="chain" id="PRO_0000381343" description="Biotin synthase">
    <location>
        <begin position="1"/>
        <end position="353"/>
    </location>
</feature>
<feature type="domain" description="Radical SAM core" evidence="2">
    <location>
        <begin position="72"/>
        <end position="299"/>
    </location>
</feature>
<feature type="region of interest" description="Disordered" evidence="3">
    <location>
        <begin position="1"/>
        <end position="30"/>
    </location>
</feature>
<feature type="compositionally biased region" description="Low complexity" evidence="3">
    <location>
        <begin position="1"/>
        <end position="22"/>
    </location>
</feature>
<feature type="binding site" evidence="1">
    <location>
        <position position="87"/>
    </location>
    <ligand>
        <name>[4Fe-4S] cluster</name>
        <dbReference type="ChEBI" id="CHEBI:49883"/>
        <note>4Fe-4S-S-AdoMet</note>
    </ligand>
</feature>
<feature type="binding site" evidence="1">
    <location>
        <position position="91"/>
    </location>
    <ligand>
        <name>[4Fe-4S] cluster</name>
        <dbReference type="ChEBI" id="CHEBI:49883"/>
        <note>4Fe-4S-S-AdoMet</note>
    </ligand>
</feature>
<feature type="binding site" evidence="1">
    <location>
        <position position="94"/>
    </location>
    <ligand>
        <name>[4Fe-4S] cluster</name>
        <dbReference type="ChEBI" id="CHEBI:49883"/>
        <note>4Fe-4S-S-AdoMet</note>
    </ligand>
</feature>
<feature type="binding site" evidence="1">
    <location>
        <position position="131"/>
    </location>
    <ligand>
        <name>[2Fe-2S] cluster</name>
        <dbReference type="ChEBI" id="CHEBI:190135"/>
    </ligand>
</feature>
<feature type="binding site" evidence="1">
    <location>
        <position position="162"/>
    </location>
    <ligand>
        <name>[2Fe-2S] cluster</name>
        <dbReference type="ChEBI" id="CHEBI:190135"/>
    </ligand>
</feature>
<feature type="binding site" evidence="1">
    <location>
        <position position="222"/>
    </location>
    <ligand>
        <name>[2Fe-2S] cluster</name>
        <dbReference type="ChEBI" id="CHEBI:190135"/>
    </ligand>
</feature>
<feature type="binding site" evidence="1">
    <location>
        <position position="294"/>
    </location>
    <ligand>
        <name>[2Fe-2S] cluster</name>
        <dbReference type="ChEBI" id="CHEBI:190135"/>
    </ligand>
</feature>
<keyword id="KW-0001">2Fe-2S</keyword>
<keyword id="KW-0004">4Fe-4S</keyword>
<keyword id="KW-0093">Biotin biosynthesis</keyword>
<keyword id="KW-0408">Iron</keyword>
<keyword id="KW-0411">Iron-sulfur</keyword>
<keyword id="KW-0479">Metal-binding</keyword>
<keyword id="KW-1185">Reference proteome</keyword>
<keyword id="KW-0949">S-adenosyl-L-methionine</keyword>
<keyword id="KW-0808">Transferase</keyword>
<sequence length="353" mass="37780">MTACSTTPTTSATSAQPAAGSPLQWHARPSKSDTLPFEGAWSVQAIQELLDKPFMDLMFQAQSVHREHWPAGDIELATLLSVKTGGCPENCGYCPQAAEFDTGVKAEKLMSVDEVTRAAQAAKDAGATRFCMGAAWRAPKDRDIEKMNELIGAVKGLGMQTCATLGMLQPHQAQSLREAGLDYYNHNLDTAPEYYQDVVSTRQYQDRLDTLKAVRGAGISVCCGGIIGMGEAPVHRAGLIAQLANLNPHPESVPINSLVRVPGTPLADSEPVDPLDFVRVIAVARITMPTARVRLSAGRQQLGDAVQALCFMAGANSIFYGDKLLVTGNPDVEADTTLLRKLGLSGTRTSVQE</sequence>
<reference key="1">
    <citation type="submission" date="2007-11" db="EMBL/GenBank/DDBJ databases">
        <title>Complete sequence of Delftia acidovorans DSM 14801 / SPH-1.</title>
        <authorList>
            <person name="Copeland A."/>
            <person name="Lucas S."/>
            <person name="Lapidus A."/>
            <person name="Barry K."/>
            <person name="Glavina del Rio T."/>
            <person name="Dalin E."/>
            <person name="Tice H."/>
            <person name="Pitluck S."/>
            <person name="Lowry S."/>
            <person name="Clum A."/>
            <person name="Schmutz J."/>
            <person name="Larimer F."/>
            <person name="Land M."/>
            <person name="Hauser L."/>
            <person name="Kyrpides N."/>
            <person name="Kim E."/>
            <person name="Schleheck D."/>
            <person name="Richardson P."/>
        </authorList>
    </citation>
    <scope>NUCLEOTIDE SEQUENCE [LARGE SCALE GENOMIC DNA]</scope>
    <source>
        <strain>DSM 14801 / SPH-1</strain>
    </source>
</reference>
<organism>
    <name type="scientific">Delftia acidovorans (strain DSM 14801 / SPH-1)</name>
    <dbReference type="NCBI Taxonomy" id="398578"/>
    <lineage>
        <taxon>Bacteria</taxon>
        <taxon>Pseudomonadati</taxon>
        <taxon>Pseudomonadota</taxon>
        <taxon>Betaproteobacteria</taxon>
        <taxon>Burkholderiales</taxon>
        <taxon>Comamonadaceae</taxon>
        <taxon>Delftia</taxon>
    </lineage>
</organism>
<gene>
    <name evidence="1" type="primary">bioB</name>
    <name type="ordered locus">Daci_3779</name>
</gene>
<name>BIOB_DELAS</name>
<comment type="function">
    <text evidence="1">Catalyzes the conversion of dethiobiotin (DTB) to biotin by the insertion of a sulfur atom into dethiobiotin via a radical-based mechanism.</text>
</comment>
<comment type="catalytic activity">
    <reaction evidence="1">
        <text>(4R,5S)-dethiobiotin + (sulfur carrier)-SH + 2 reduced [2Fe-2S]-[ferredoxin] + 2 S-adenosyl-L-methionine = (sulfur carrier)-H + biotin + 2 5'-deoxyadenosine + 2 L-methionine + 2 oxidized [2Fe-2S]-[ferredoxin]</text>
        <dbReference type="Rhea" id="RHEA:22060"/>
        <dbReference type="Rhea" id="RHEA-COMP:10000"/>
        <dbReference type="Rhea" id="RHEA-COMP:10001"/>
        <dbReference type="Rhea" id="RHEA-COMP:14737"/>
        <dbReference type="Rhea" id="RHEA-COMP:14739"/>
        <dbReference type="ChEBI" id="CHEBI:17319"/>
        <dbReference type="ChEBI" id="CHEBI:29917"/>
        <dbReference type="ChEBI" id="CHEBI:33737"/>
        <dbReference type="ChEBI" id="CHEBI:33738"/>
        <dbReference type="ChEBI" id="CHEBI:57586"/>
        <dbReference type="ChEBI" id="CHEBI:57844"/>
        <dbReference type="ChEBI" id="CHEBI:59789"/>
        <dbReference type="ChEBI" id="CHEBI:64428"/>
        <dbReference type="ChEBI" id="CHEBI:149473"/>
        <dbReference type="EC" id="2.8.1.6"/>
    </reaction>
</comment>
<comment type="cofactor">
    <cofactor evidence="1">
        <name>[4Fe-4S] cluster</name>
        <dbReference type="ChEBI" id="CHEBI:49883"/>
    </cofactor>
    <text evidence="1">Binds 1 [4Fe-4S] cluster. The cluster is coordinated with 3 cysteines and an exchangeable S-adenosyl-L-methionine.</text>
</comment>
<comment type="cofactor">
    <cofactor evidence="1">
        <name>[2Fe-2S] cluster</name>
        <dbReference type="ChEBI" id="CHEBI:190135"/>
    </cofactor>
    <text evidence="1">Binds 1 [2Fe-2S] cluster. The cluster is coordinated with 3 cysteines and 1 arginine.</text>
</comment>
<comment type="pathway">
    <text evidence="1">Cofactor biosynthesis; biotin biosynthesis; biotin from 7,8-diaminononanoate: step 2/2.</text>
</comment>
<comment type="subunit">
    <text evidence="1">Homodimer.</text>
</comment>
<comment type="similarity">
    <text evidence="1">Belongs to the radical SAM superfamily. Biotin synthase family.</text>
</comment>
<protein>
    <recommendedName>
        <fullName evidence="1">Biotin synthase</fullName>
        <ecNumber evidence="1">2.8.1.6</ecNumber>
    </recommendedName>
</protein>
<proteinExistence type="inferred from homology"/>